<evidence type="ECO:0000250" key="1"/>
<evidence type="ECO:0000255" key="2"/>
<evidence type="ECO:0000255" key="3">
    <source>
        <dbReference type="PROSITE-ProRule" id="PRU00352"/>
    </source>
</evidence>
<evidence type="ECO:0000256" key="4">
    <source>
        <dbReference type="SAM" id="MobiDB-lite"/>
    </source>
</evidence>
<evidence type="ECO:0000305" key="5"/>
<proteinExistence type="evidence at transcript level"/>
<keyword id="KW-0217">Developmental protein</keyword>
<keyword id="KW-0221">Differentiation</keyword>
<keyword id="KW-1015">Disulfide bond</keyword>
<keyword id="KW-0325">Glycoprotein</keyword>
<keyword id="KW-0393">Immunoglobulin domain</keyword>
<keyword id="KW-0524">Neurogenesis</keyword>
<keyword id="KW-1185">Reference proteome</keyword>
<keyword id="KW-0964">Secreted</keyword>
<keyword id="KW-0732">Signal</keyword>
<sequence length="778" mass="88905">MDYLWWIVLLIWTLIAPERGTVAQRSKSNVPRLKPSYKEMLESNNLLTFNGLANSSAYHTFLLDEERGRLFVGAKDHVLSFNLVDINMDQQLISWPSSPSRRDECKWAGKDVQKECANFIKVLQPFNQTHLYACGTGAFHPVCAHVEVGKRSEDNTFRLGSSFENGRGKSPYDPKLQTASMLIDGELYAGTSADFMGRDFAIFRTLGKHHPIRTEQHDSRWLNDPRFVSVHLIPESDNAEDDKIYLFFRENAIDGEQISKATHARIGQLCKNDFGGHRSLVNKWTTFLKARLVCSVPGLNGIDTHFDELQDVFLMSSKDPKNPIIYAVFTTSSNIFKGSAVCMYSMADIRRVFLGPYAHRDGPNYQWVPFLNRVPYPRPGTCPSKTFDGFESTKDFPDDVITFARSHPAMYNPVFPINNHPIIIKTDVDYQFTQIVVDRVEAEDGQYDVMFIGTDMGTVLKVVSIPRGTWHDLEEVLLEEMTVFREPTAITAMELSTKQQQLYLGSAIGVSQMPLHRCDVYGKACAECCLARDPYCAWDGSQCSRYFPTAKRRTRRQDIRNGDPLTQCSDLQHHDEADGEAGLLDKTVYGVENSSSFLECSPKSQRALIYWQFQRHGEDHKLEIKSDERVLGTEQGLLIRSLHQKDSGVYYCHAVEHGFIQTLLRLTLNVIPAEHLDDLLHRDPPDTNDPANGKMWYRDFLSLINPPSPNSVDQLCEQVWKRERKQRRQKANLLHASQSHTSQILHSSQSHAKWKLLQENKKGRNRRTHEMQRAPRSV</sequence>
<dbReference type="EMBL" id="AF083382">
    <property type="protein sequence ID" value="AAD28103.1"/>
    <property type="molecule type" value="mRNA"/>
</dbReference>
<dbReference type="RefSeq" id="NP_571136.1">
    <property type="nucleotide sequence ID" value="NM_131061.1"/>
</dbReference>
<dbReference type="SMR" id="Q9W686"/>
<dbReference type="FunCoup" id="Q9W686">
    <property type="interactions" value="612"/>
</dbReference>
<dbReference type="STRING" id="7955.ENSDARP00000061885"/>
<dbReference type="GlyCosmos" id="Q9W686">
    <property type="glycosylation" value="3 sites, No reported glycans"/>
</dbReference>
<dbReference type="PaxDb" id="7955-ENSDARP00000061885"/>
<dbReference type="GeneID" id="30267"/>
<dbReference type="KEGG" id="dre:30267"/>
<dbReference type="AGR" id="ZFIN:ZDB-GENE-991209-6"/>
<dbReference type="CTD" id="30267"/>
<dbReference type="ZFIN" id="ZDB-GENE-991209-6">
    <property type="gene designation" value="sema3ab"/>
</dbReference>
<dbReference type="eggNOG" id="KOG3611">
    <property type="taxonomic scope" value="Eukaryota"/>
</dbReference>
<dbReference type="InParanoid" id="Q9W686"/>
<dbReference type="OrthoDB" id="9988752at2759"/>
<dbReference type="PhylomeDB" id="Q9W686"/>
<dbReference type="Reactome" id="R-DRE-399954">
    <property type="pathway name" value="Sema3A PAK dependent Axon repulsion"/>
</dbReference>
<dbReference type="Reactome" id="R-DRE-399956">
    <property type="pathway name" value="CRMPs in Sema3A signaling"/>
</dbReference>
<dbReference type="PRO" id="PR:Q9W686"/>
<dbReference type="Proteomes" id="UP000000437">
    <property type="component" value="Alternate scaffold 18"/>
</dbReference>
<dbReference type="Proteomes" id="UP000000437">
    <property type="component" value="Chromosome 18"/>
</dbReference>
<dbReference type="GO" id="GO:0030424">
    <property type="term" value="C:axon"/>
    <property type="evidence" value="ECO:0000318"/>
    <property type="project" value="GO_Central"/>
</dbReference>
<dbReference type="GO" id="GO:0005615">
    <property type="term" value="C:extracellular space"/>
    <property type="evidence" value="ECO:0000318"/>
    <property type="project" value="GO_Central"/>
</dbReference>
<dbReference type="GO" id="GO:0098978">
    <property type="term" value="C:glutamatergic synapse"/>
    <property type="evidence" value="ECO:0000318"/>
    <property type="project" value="GO_Central"/>
</dbReference>
<dbReference type="GO" id="GO:0005886">
    <property type="term" value="C:plasma membrane"/>
    <property type="evidence" value="ECO:0000318"/>
    <property type="project" value="GO_Central"/>
</dbReference>
<dbReference type="GO" id="GO:0045499">
    <property type="term" value="F:chemorepellent activity"/>
    <property type="evidence" value="ECO:0000318"/>
    <property type="project" value="GO_Central"/>
</dbReference>
<dbReference type="GO" id="GO:0038191">
    <property type="term" value="F:neuropilin binding"/>
    <property type="evidence" value="ECO:0000318"/>
    <property type="project" value="GO_Central"/>
</dbReference>
<dbReference type="GO" id="GO:0030215">
    <property type="term" value="F:semaphorin receptor binding"/>
    <property type="evidence" value="ECO:0000318"/>
    <property type="project" value="GO_Central"/>
</dbReference>
<dbReference type="GO" id="GO:0001569">
    <property type="term" value="P:branching involved in blood vessel morphogenesis"/>
    <property type="evidence" value="ECO:0000315"/>
    <property type="project" value="ZFIN"/>
</dbReference>
<dbReference type="GO" id="GO:0048755">
    <property type="term" value="P:branching morphogenesis of a nerve"/>
    <property type="evidence" value="ECO:0000316"/>
    <property type="project" value="ZFIN"/>
</dbReference>
<dbReference type="GO" id="GO:0001763">
    <property type="term" value="P:morphogenesis of a branching structure"/>
    <property type="evidence" value="ECO:0000315"/>
    <property type="project" value="ZFIN"/>
</dbReference>
<dbReference type="GO" id="GO:0008045">
    <property type="term" value="P:motor neuron axon guidance"/>
    <property type="evidence" value="ECO:0000316"/>
    <property type="project" value="ZFIN"/>
</dbReference>
<dbReference type="GO" id="GO:0050919">
    <property type="term" value="P:negative chemotaxis"/>
    <property type="evidence" value="ECO:0000318"/>
    <property type="project" value="GO_Central"/>
</dbReference>
<dbReference type="GO" id="GO:0001755">
    <property type="term" value="P:neural crest cell migration"/>
    <property type="evidence" value="ECO:0000318"/>
    <property type="project" value="GO_Central"/>
</dbReference>
<dbReference type="GO" id="GO:0030335">
    <property type="term" value="P:positive regulation of cell migration"/>
    <property type="evidence" value="ECO:0000318"/>
    <property type="project" value="GO_Central"/>
</dbReference>
<dbReference type="GO" id="GO:0071526">
    <property type="term" value="P:semaphorin-plexin signaling pathway"/>
    <property type="evidence" value="ECO:0000318"/>
    <property type="project" value="GO_Central"/>
</dbReference>
<dbReference type="CDD" id="cd05871">
    <property type="entry name" value="Ig_Sema3"/>
    <property type="match status" value="1"/>
</dbReference>
<dbReference type="FunFam" id="2.130.10.10:FF:000015">
    <property type="entry name" value="Semaphorin 3B"/>
    <property type="match status" value="1"/>
</dbReference>
<dbReference type="FunFam" id="2.60.40.10:FF:000030">
    <property type="entry name" value="Semaphorin 3F like"/>
    <property type="match status" value="1"/>
</dbReference>
<dbReference type="FunFam" id="3.30.1680.10:FF:000001">
    <property type="entry name" value="Semaphorin 3F like"/>
    <property type="match status" value="1"/>
</dbReference>
<dbReference type="Gene3D" id="2.60.40.10">
    <property type="entry name" value="Immunoglobulins"/>
    <property type="match status" value="1"/>
</dbReference>
<dbReference type="Gene3D" id="3.30.1680.10">
    <property type="entry name" value="ligand-binding face of the semaphorins, domain 2"/>
    <property type="match status" value="1"/>
</dbReference>
<dbReference type="Gene3D" id="2.130.10.10">
    <property type="entry name" value="YVTN repeat-like/Quinoprotein amine dehydrogenase"/>
    <property type="match status" value="1"/>
</dbReference>
<dbReference type="InterPro" id="IPR007110">
    <property type="entry name" value="Ig-like_dom"/>
</dbReference>
<dbReference type="InterPro" id="IPR036179">
    <property type="entry name" value="Ig-like_dom_sf"/>
</dbReference>
<dbReference type="InterPro" id="IPR013783">
    <property type="entry name" value="Ig-like_fold"/>
</dbReference>
<dbReference type="InterPro" id="IPR003599">
    <property type="entry name" value="Ig_sub"/>
</dbReference>
<dbReference type="InterPro" id="IPR016201">
    <property type="entry name" value="PSI"/>
</dbReference>
<dbReference type="InterPro" id="IPR001627">
    <property type="entry name" value="Semap_dom"/>
</dbReference>
<dbReference type="InterPro" id="IPR036352">
    <property type="entry name" value="Semap_dom_sf"/>
</dbReference>
<dbReference type="InterPro" id="IPR027231">
    <property type="entry name" value="Semaphorin"/>
</dbReference>
<dbReference type="InterPro" id="IPR015943">
    <property type="entry name" value="WD40/YVTN_repeat-like_dom_sf"/>
</dbReference>
<dbReference type="PANTHER" id="PTHR11036">
    <property type="entry name" value="SEMAPHORIN"/>
    <property type="match status" value="1"/>
</dbReference>
<dbReference type="PANTHER" id="PTHR11036:SF23">
    <property type="entry name" value="SEMAPHORIN-3A"/>
    <property type="match status" value="1"/>
</dbReference>
<dbReference type="Pfam" id="PF01403">
    <property type="entry name" value="Sema"/>
    <property type="match status" value="1"/>
</dbReference>
<dbReference type="SMART" id="SM00409">
    <property type="entry name" value="IG"/>
    <property type="match status" value="1"/>
</dbReference>
<dbReference type="SMART" id="SM00423">
    <property type="entry name" value="PSI"/>
    <property type="match status" value="1"/>
</dbReference>
<dbReference type="SMART" id="SM00630">
    <property type="entry name" value="Sema"/>
    <property type="match status" value="1"/>
</dbReference>
<dbReference type="SUPFAM" id="SSF48726">
    <property type="entry name" value="Immunoglobulin"/>
    <property type="match status" value="1"/>
</dbReference>
<dbReference type="SUPFAM" id="SSF103575">
    <property type="entry name" value="Plexin repeat"/>
    <property type="match status" value="1"/>
</dbReference>
<dbReference type="SUPFAM" id="SSF101912">
    <property type="entry name" value="Sema domain"/>
    <property type="match status" value="1"/>
</dbReference>
<dbReference type="PROSITE" id="PS50835">
    <property type="entry name" value="IG_LIKE"/>
    <property type="match status" value="1"/>
</dbReference>
<dbReference type="PROSITE" id="PS51004">
    <property type="entry name" value="SEMA"/>
    <property type="match status" value="1"/>
</dbReference>
<protein>
    <recommendedName>
        <fullName>Semaphorin-3ab</fullName>
    </recommendedName>
    <alternativeName>
        <fullName>Semaphorin-1B</fullName>
    </alternativeName>
    <alternativeName>
        <fullName>Semaphorin-Z1B</fullName>
        <shortName>Sema Z1B</shortName>
    </alternativeName>
</protein>
<feature type="signal peptide" evidence="2">
    <location>
        <begin position="1"/>
        <end position="17"/>
    </location>
</feature>
<feature type="chain" id="PRO_0000032308" description="Semaphorin-3ab">
    <location>
        <begin position="18"/>
        <end position="778"/>
    </location>
</feature>
<feature type="domain" description="Sema" evidence="3">
    <location>
        <begin position="32"/>
        <end position="515"/>
    </location>
</feature>
<feature type="domain" description="Ig-like C2-type">
    <location>
        <begin position="579"/>
        <end position="668"/>
    </location>
</feature>
<feature type="region of interest" description="Disordered" evidence="4">
    <location>
        <begin position="727"/>
        <end position="778"/>
    </location>
</feature>
<feature type="compositionally biased region" description="Polar residues" evidence="4">
    <location>
        <begin position="735"/>
        <end position="751"/>
    </location>
</feature>
<feature type="compositionally biased region" description="Basic and acidic residues" evidence="4">
    <location>
        <begin position="756"/>
        <end position="778"/>
    </location>
</feature>
<feature type="glycosylation site" description="N-linked (GlcNAc...) asparagine" evidence="2">
    <location>
        <position position="54"/>
    </location>
</feature>
<feature type="glycosylation site" description="N-linked (GlcNAc...) asparagine" evidence="2">
    <location>
        <position position="127"/>
    </location>
</feature>
<feature type="glycosylation site" description="N-linked (GlcNAc...) asparagine" evidence="2">
    <location>
        <position position="593"/>
    </location>
</feature>
<feature type="disulfide bond" evidence="1">
    <location>
        <begin position="105"/>
        <end position="116"/>
    </location>
</feature>
<feature type="disulfide bond" evidence="1">
    <location>
        <begin position="134"/>
        <end position="143"/>
    </location>
</feature>
<feature type="disulfide bond" evidence="1">
    <location>
        <begin position="270"/>
        <end position="382"/>
    </location>
</feature>
<feature type="disulfide bond" evidence="1">
    <location>
        <begin position="294"/>
        <end position="342"/>
    </location>
</feature>
<feature type="disulfide bond" evidence="1">
    <location>
        <begin position="518"/>
        <end position="536"/>
    </location>
</feature>
<feature type="disulfide bond" evidence="1">
    <location>
        <begin position="652"/>
        <end position="716"/>
    </location>
</feature>
<gene>
    <name type="primary">sema3ab</name>
    <name type="synonym">semaz1b</name>
</gene>
<reference key="1">
    <citation type="journal article" date="1999" name="Mech. Dev.">
        <title>Zebrafish semaphorin Z1b inhibits growing motor axons in vivo.</title>
        <authorList>
            <person name="Roos M."/>
            <person name="Schachner M."/>
            <person name="Bernhardt R.R."/>
        </authorList>
    </citation>
    <scope>NUCLEOTIDE SEQUENCE [MRNA]</scope>
</reference>
<comment type="function">
    <text>Might normally influence the midsegmental pathway choice of the ventrally extending motor axons by contributing to a repulsive domain in the posterior somite.</text>
</comment>
<comment type="subcellular location">
    <subcellularLocation>
        <location evidence="1">Secreted</location>
    </subcellularLocation>
</comment>
<comment type="tissue specificity">
    <text>Expressed in rhombomeres three and five, and in the posterior half of newly formed somites which is avoided by ventrally extending motor axons.</text>
</comment>
<comment type="similarity">
    <text evidence="5">Belongs to the semaphorin family.</text>
</comment>
<name>SE3AB_DANRE</name>
<accession>Q9W686</accession>
<organism>
    <name type="scientific">Danio rerio</name>
    <name type="common">Zebrafish</name>
    <name type="synonym">Brachydanio rerio</name>
    <dbReference type="NCBI Taxonomy" id="7955"/>
    <lineage>
        <taxon>Eukaryota</taxon>
        <taxon>Metazoa</taxon>
        <taxon>Chordata</taxon>
        <taxon>Craniata</taxon>
        <taxon>Vertebrata</taxon>
        <taxon>Euteleostomi</taxon>
        <taxon>Actinopterygii</taxon>
        <taxon>Neopterygii</taxon>
        <taxon>Teleostei</taxon>
        <taxon>Ostariophysi</taxon>
        <taxon>Cypriniformes</taxon>
        <taxon>Danionidae</taxon>
        <taxon>Danioninae</taxon>
        <taxon>Danio</taxon>
    </lineage>
</organism>